<comment type="function">
    <text>Present in the aqueous fluid surrounding olfactory sensory dendrites and are thought to aid in the capture and transport of hydrophobic odorants into and through this fluid.</text>
</comment>
<comment type="subunit">
    <text evidence="5">Homodimer.</text>
</comment>
<comment type="tissue specificity">
    <text evidence="2 4">Detected in antenna (at protein level). Expressed at high levels in antenna.</text>
</comment>
<comment type="similarity">
    <text evidence="5">Belongs to the PBP/GOBP family.</text>
</comment>
<organism>
    <name type="scientific">Bombyx mori</name>
    <name type="common">Silk moth</name>
    <dbReference type="NCBI Taxonomy" id="7091"/>
    <lineage>
        <taxon>Eukaryota</taxon>
        <taxon>Metazoa</taxon>
        <taxon>Ecdysozoa</taxon>
        <taxon>Arthropoda</taxon>
        <taxon>Hexapoda</taxon>
        <taxon>Insecta</taxon>
        <taxon>Pterygota</taxon>
        <taxon>Neoptera</taxon>
        <taxon>Endopterygota</taxon>
        <taxon>Lepidoptera</taxon>
        <taxon>Glossata</taxon>
        <taxon>Ditrysia</taxon>
        <taxon>Bombycoidea</taxon>
        <taxon>Bombycidae</taxon>
        <taxon>Bombycinae</taxon>
        <taxon>Bombyx</taxon>
    </lineage>
</organism>
<dbReference type="EMBL" id="X94989">
    <property type="protein sequence ID" value="CAA64445.1"/>
    <property type="molecule type" value="mRNA"/>
</dbReference>
<dbReference type="RefSeq" id="NP_001037498.1">
    <property type="nucleotide sequence ID" value="NM_001044033.1"/>
</dbReference>
<dbReference type="PDB" id="2WC5">
    <property type="method" value="X-ray"/>
    <property type="resolution" value="1.90 A"/>
    <property type="chains" value="A=20-160"/>
</dbReference>
<dbReference type="PDB" id="2WC6">
    <property type="method" value="X-ray"/>
    <property type="resolution" value="1.90 A"/>
    <property type="chains" value="A=20-160"/>
</dbReference>
<dbReference type="PDB" id="2WCH">
    <property type="method" value="X-ray"/>
    <property type="resolution" value="1.70 A"/>
    <property type="chains" value="A=20-160"/>
</dbReference>
<dbReference type="PDB" id="2WCJ">
    <property type="method" value="X-ray"/>
    <property type="resolution" value="1.40 A"/>
    <property type="chains" value="A=20-160"/>
</dbReference>
<dbReference type="PDB" id="2WCK">
    <property type="method" value="X-ray"/>
    <property type="resolution" value="1.61 A"/>
    <property type="chains" value="A=20-160"/>
</dbReference>
<dbReference type="PDB" id="2WCL">
    <property type="method" value="X-ray"/>
    <property type="resolution" value="1.61 A"/>
    <property type="chains" value="A=20-160"/>
</dbReference>
<dbReference type="PDB" id="2WCM">
    <property type="method" value="X-ray"/>
    <property type="resolution" value="1.50 A"/>
    <property type="chains" value="A=20-160"/>
</dbReference>
<dbReference type="PDBsum" id="2WC5"/>
<dbReference type="PDBsum" id="2WC6"/>
<dbReference type="PDBsum" id="2WCH"/>
<dbReference type="PDBsum" id="2WCJ"/>
<dbReference type="PDBsum" id="2WCK"/>
<dbReference type="PDBsum" id="2WCL"/>
<dbReference type="PDBsum" id="2WCM"/>
<dbReference type="SMR" id="P34170"/>
<dbReference type="FunCoup" id="P34170">
    <property type="interactions" value="35"/>
</dbReference>
<dbReference type="STRING" id="7091.P34170"/>
<dbReference type="PaxDb" id="7091-BGIBMGA012614-TA"/>
<dbReference type="EnsemblMetazoa" id="NM_001044033.1">
    <property type="protein sequence ID" value="NP_001037498.1"/>
    <property type="gene ID" value="GeneID_693052"/>
</dbReference>
<dbReference type="GeneID" id="693052"/>
<dbReference type="KEGG" id="bmor:693052"/>
<dbReference type="CTD" id="693052"/>
<dbReference type="eggNOG" id="ENOG502TKYM">
    <property type="taxonomic scope" value="Eukaryota"/>
</dbReference>
<dbReference type="HOGENOM" id="CLU_1827210_0_0_1"/>
<dbReference type="InParanoid" id="P34170"/>
<dbReference type="OMA" id="IHNCEKQ"/>
<dbReference type="OrthoDB" id="494413at7088"/>
<dbReference type="EvolutionaryTrace" id="P34170"/>
<dbReference type="Proteomes" id="UP000005204">
    <property type="component" value="Unassembled WGS sequence"/>
</dbReference>
<dbReference type="GO" id="GO:0005549">
    <property type="term" value="F:odorant binding"/>
    <property type="evidence" value="ECO:0007669"/>
    <property type="project" value="InterPro"/>
</dbReference>
<dbReference type="GO" id="GO:0007608">
    <property type="term" value="P:sensory perception of smell"/>
    <property type="evidence" value="ECO:0007669"/>
    <property type="project" value="UniProtKB-KW"/>
</dbReference>
<dbReference type="CDD" id="cd23992">
    <property type="entry name" value="PBP_GOBP"/>
    <property type="match status" value="1"/>
</dbReference>
<dbReference type="Gene3D" id="1.10.238.20">
    <property type="entry name" value="Pheromone/general odorant binding protein domain"/>
    <property type="match status" value="1"/>
</dbReference>
<dbReference type="InterPro" id="IPR006072">
    <property type="entry name" value="Odorant/phero-bd_Lep"/>
</dbReference>
<dbReference type="InterPro" id="IPR006170">
    <property type="entry name" value="PBP/GOBP"/>
</dbReference>
<dbReference type="InterPro" id="IPR036728">
    <property type="entry name" value="PBP_GOBP_sf"/>
</dbReference>
<dbReference type="Pfam" id="PF01395">
    <property type="entry name" value="PBP_GOBP"/>
    <property type="match status" value="1"/>
</dbReference>
<dbReference type="PIRSF" id="PIRSF015604">
    <property type="entry name" value="Odorant/phero_bd"/>
    <property type="match status" value="1"/>
</dbReference>
<dbReference type="PRINTS" id="PR00484">
    <property type="entry name" value="PBPGOBP"/>
</dbReference>
<dbReference type="SMART" id="SM00708">
    <property type="entry name" value="PhBP"/>
    <property type="match status" value="1"/>
</dbReference>
<dbReference type="SUPFAM" id="SSF47565">
    <property type="entry name" value="Insect pheromone/odorant-binding proteins"/>
    <property type="match status" value="1"/>
</dbReference>
<evidence type="ECO:0000250" key="1"/>
<evidence type="ECO:0000269" key="2">
    <source>
    </source>
</evidence>
<evidence type="ECO:0000269" key="3">
    <source>
    </source>
</evidence>
<evidence type="ECO:0000269" key="4">
    <source>
    </source>
</evidence>
<evidence type="ECO:0000305" key="5"/>
<evidence type="ECO:0007829" key="6">
    <source>
        <dbReference type="PDB" id="2WCJ"/>
    </source>
</evidence>
<protein>
    <recommendedName>
        <fullName>General odorant-binding protein 2</fullName>
        <shortName>GOBP2</shortName>
    </recommendedName>
</protein>
<accession>P34170</accession>
<accession>Q17226</accession>
<reference key="1">
    <citation type="journal article" date="1996" name="Insect Biochem. Mol. Biol.">
        <title>Binding proteins from the antennae of Bombyx mori.</title>
        <authorList>
            <person name="Krieger J."/>
            <person name="von Nickisch-Rosenegk E."/>
            <person name="Mameli M."/>
            <person name="Pelosi P."/>
            <person name="Breer H."/>
        </authorList>
    </citation>
    <scope>NUCLEOTIDE SEQUENCE [MRNA]</scope>
    <scope>TISSUE SPECIFICITY</scope>
    <source>
        <tissue>Antenna</tissue>
    </source>
</reference>
<reference key="2">
    <citation type="journal article" date="1991" name="J. Neurobiol.">
        <title>Odorant-binding-protein subfamilies associate with distinct classes of olfactory receptor neurons in insects.</title>
        <authorList>
            <person name="Vogt R.G."/>
            <person name="Prestwich G.D."/>
            <person name="Lerner M.R."/>
        </authorList>
    </citation>
    <scope>PROTEIN SEQUENCE OF 21-41</scope>
    <source>
        <tissue>Antenna</tissue>
    </source>
</reference>
<reference key="3">
    <citation type="journal article" date="2009" name="J. Mol. Biol.">
        <title>Characterisation of Bombyx mori odorant-binding proteins reveals that a general odorant-binding protein discriminates between sex pheromone components.</title>
        <authorList>
            <person name="Zhou J.J."/>
            <person name="Robertson G."/>
            <person name="He X."/>
            <person name="Dufour S."/>
            <person name="Hooper A.M."/>
            <person name="Pickett J.A."/>
            <person name="Keep N.H."/>
            <person name="Field L.M."/>
        </authorList>
    </citation>
    <scope>X-RAY CRYSTALLOGRAPHY (1.4 ANGSTROMS) OF 20-160 IN COMPLEXES WITH BOMBYKOL; BOMBYKAL AND SYNTHETIC ANALOGS</scope>
    <scope>TISSUE SPECIFICITY</scope>
</reference>
<feature type="signal peptide" evidence="3">
    <location>
        <begin position="1"/>
        <end position="20"/>
    </location>
</feature>
<feature type="chain" id="PRO_0000012566" description="General odorant-binding protein 2">
    <location>
        <begin position="21"/>
        <end position="160"/>
    </location>
</feature>
<feature type="disulfide bond" evidence="1">
    <location>
        <begin position="38"/>
        <end position="73"/>
    </location>
</feature>
<feature type="disulfide bond" evidence="1">
    <location>
        <begin position="69"/>
        <end position="127"/>
    </location>
</feature>
<feature type="disulfide bond" evidence="1">
    <location>
        <begin position="116"/>
        <end position="136"/>
    </location>
</feature>
<feature type="helix" evidence="6">
    <location>
        <begin position="21"/>
        <end position="31"/>
    </location>
</feature>
<feature type="helix" evidence="6">
    <location>
        <begin position="32"/>
        <end position="34"/>
    </location>
</feature>
<feature type="helix" evidence="6">
    <location>
        <begin position="35"/>
        <end position="42"/>
    </location>
</feature>
<feature type="turn" evidence="6">
    <location>
        <begin position="46"/>
        <end position="48"/>
    </location>
</feature>
<feature type="helix" evidence="6">
    <location>
        <begin position="52"/>
        <end position="56"/>
    </location>
</feature>
<feature type="helix" evidence="6">
    <location>
        <begin position="65"/>
        <end position="77"/>
    </location>
</feature>
<feature type="strand" evidence="6">
    <location>
        <begin position="85"/>
        <end position="87"/>
    </location>
</feature>
<feature type="helix" evidence="6">
    <location>
        <begin position="89"/>
        <end position="97"/>
    </location>
</feature>
<feature type="turn" evidence="6">
    <location>
        <begin position="100"/>
        <end position="102"/>
    </location>
</feature>
<feature type="helix" evidence="6">
    <location>
        <begin position="103"/>
        <end position="119"/>
    </location>
</feature>
<feature type="turn" evidence="6">
    <location>
        <begin position="120"/>
        <end position="122"/>
    </location>
</feature>
<feature type="helix" evidence="6">
    <location>
        <begin position="126"/>
        <end position="143"/>
    </location>
</feature>
<feature type="helix" evidence="6">
    <location>
        <begin position="150"/>
        <end position="155"/>
    </location>
</feature>
<feature type="turn" evidence="6">
    <location>
        <begin position="156"/>
        <end position="158"/>
    </location>
</feature>
<proteinExistence type="evidence at protein level"/>
<name>OBP2_BOMMO</name>
<sequence>MFSFLILVFVASVADSVIGTAEVMSHVTAHFGKTLEECREESGLSVDILDEFKHFWSDDFDVVHRELGCAIICMSNKFSLMDDDVRMHHVNMDEYIKGFPNGQVLAEKMVKLIHNCEKQFDTETDDCTRVVKVAACFKKDSRKEGIAPEVAMIEAVIEKY</sequence>
<keyword id="KW-0002">3D-structure</keyword>
<keyword id="KW-0903">Direct protein sequencing</keyword>
<keyword id="KW-1015">Disulfide bond</keyword>
<keyword id="KW-0552">Olfaction</keyword>
<keyword id="KW-1185">Reference proteome</keyword>
<keyword id="KW-0716">Sensory transduction</keyword>
<keyword id="KW-0732">Signal</keyword>
<keyword id="KW-0813">Transport</keyword>